<organism>
    <name type="scientific">Felis catus</name>
    <name type="common">Cat</name>
    <name type="synonym">Felis silvestris catus</name>
    <dbReference type="NCBI Taxonomy" id="9685"/>
    <lineage>
        <taxon>Eukaryota</taxon>
        <taxon>Metazoa</taxon>
        <taxon>Chordata</taxon>
        <taxon>Craniata</taxon>
        <taxon>Vertebrata</taxon>
        <taxon>Euteleostomi</taxon>
        <taxon>Mammalia</taxon>
        <taxon>Eutheria</taxon>
        <taxon>Laurasiatheria</taxon>
        <taxon>Carnivora</taxon>
        <taxon>Feliformia</taxon>
        <taxon>Felidae</taxon>
        <taxon>Felinae</taxon>
        <taxon>Felis</taxon>
    </lineage>
</organism>
<feature type="chain" id="PRO_0000163750" description="Phosducin">
    <location>
        <begin position="1"/>
        <end position="245"/>
    </location>
</feature>
<feature type="domain" description="Phosducin" evidence="4">
    <location>
        <begin position="1"/>
        <end position="241"/>
    </location>
</feature>
<feature type="region of interest" description="Disordered" evidence="5">
    <location>
        <begin position="1"/>
        <end position="68"/>
    </location>
</feature>
<feature type="region of interest" description="Thioredoxin fold" evidence="1">
    <location>
        <begin position="111"/>
        <end position="245"/>
    </location>
</feature>
<feature type="compositionally biased region" description="Acidic residues" evidence="5">
    <location>
        <begin position="1"/>
        <end position="14"/>
    </location>
</feature>
<feature type="compositionally biased region" description="Basic and acidic residues" evidence="5">
    <location>
        <begin position="59"/>
        <end position="68"/>
    </location>
</feature>
<feature type="modified residue" description="Phosphoserine; by PKA" evidence="2">
    <location>
        <position position="73"/>
    </location>
</feature>
<keyword id="KW-0966">Cell projection</keyword>
<keyword id="KW-0969">Cilium</keyword>
<keyword id="KW-0963">Cytoplasm</keyword>
<keyword id="KW-0539">Nucleus</keyword>
<keyword id="KW-0597">Phosphoprotein</keyword>
<keyword id="KW-1185">Reference proteome</keyword>
<keyword id="KW-0716">Sensory transduction</keyword>
<keyword id="KW-0844">Vision</keyword>
<name>PHOS_FELCA</name>
<proteinExistence type="evidence at transcript level"/>
<accession>P41686</accession>
<protein>
    <recommendedName>
        <fullName>Phosducin</fullName>
        <shortName>PHD</shortName>
    </recommendedName>
    <alternativeName>
        <fullName>33 kDa phototransducing protein</fullName>
    </alternativeName>
</protein>
<comment type="function">
    <text evidence="1">Inhibits the transcriptional activation activity of the cone-rod homeobox CRX (By similarity). May participate in the regulation of visual phototransduction or in the integration of photoreceptor metabolism.</text>
</comment>
<comment type="subunit">
    <text evidence="1">Interacts with CRX (By similarity). Forms a complex with the beta and gamma subunits of the GTP-binding protein, transducin.</text>
</comment>
<comment type="subcellular location">
    <subcellularLocation>
        <location evidence="3">Cytoplasm</location>
        <location evidence="3">Cytosol</location>
    </subcellularLocation>
    <subcellularLocation>
        <location evidence="3">Nucleus</location>
    </subcellularLocation>
    <subcellularLocation>
        <location evidence="2">Cell projection</location>
        <location evidence="2">Cilium</location>
        <location evidence="2">Photoreceptor outer segment</location>
    </subcellularLocation>
    <subcellularLocation>
        <location evidence="2">Photoreceptor inner segment</location>
    </subcellularLocation>
</comment>
<comment type="PTM">
    <text evidence="1">Light-induced changes in cyclic nucleotide levels modulate the phosphorylation of this protein by cAMP kinase.</text>
</comment>
<comment type="similarity">
    <text evidence="6">Belongs to the phosducin family.</text>
</comment>
<dbReference type="EMBL" id="L35314">
    <property type="protein sequence ID" value="AAB59257.1"/>
    <property type="molecule type" value="mRNA"/>
</dbReference>
<dbReference type="PIR" id="S52096">
    <property type="entry name" value="S52096"/>
</dbReference>
<dbReference type="RefSeq" id="NP_001036805.1">
    <property type="nucleotide sequence ID" value="NM_001043340.1"/>
</dbReference>
<dbReference type="RefSeq" id="XP_019676889.1">
    <property type="nucleotide sequence ID" value="XM_019821330.2"/>
</dbReference>
<dbReference type="RefSeq" id="XP_019676890.1">
    <property type="nucleotide sequence ID" value="XM_019821331.2"/>
</dbReference>
<dbReference type="SMR" id="P41686"/>
<dbReference type="STRING" id="9685.ENSFCAP00000042287"/>
<dbReference type="PaxDb" id="9685-ENSFCAP00000024306"/>
<dbReference type="Ensembl" id="ENSFCAT00000055851.2">
    <property type="protein sequence ID" value="ENSFCAP00000042287.1"/>
    <property type="gene ID" value="ENSFCAG00000045009.2"/>
</dbReference>
<dbReference type="GeneID" id="751516"/>
<dbReference type="KEGG" id="fca:751516"/>
<dbReference type="CTD" id="5132"/>
<dbReference type="eggNOG" id="KOG3171">
    <property type="taxonomic scope" value="Eukaryota"/>
</dbReference>
<dbReference type="GeneTree" id="ENSGT00940000156236"/>
<dbReference type="HOGENOM" id="CLU_085598_1_0_1"/>
<dbReference type="InParanoid" id="P41686"/>
<dbReference type="OMA" id="PKYGYLC"/>
<dbReference type="OrthoDB" id="70588at2759"/>
<dbReference type="Proteomes" id="UP000011712">
    <property type="component" value="Chromosome F1"/>
</dbReference>
<dbReference type="Bgee" id="ENSFCAG00000045009">
    <property type="expression patterns" value="Expressed in eyeball of camera-type eye and 4 other cell types or tissues"/>
</dbReference>
<dbReference type="GO" id="GO:0005829">
    <property type="term" value="C:cytosol"/>
    <property type="evidence" value="ECO:0007669"/>
    <property type="project" value="UniProtKB-SubCell"/>
</dbReference>
<dbReference type="GO" id="GO:0005634">
    <property type="term" value="C:nucleus"/>
    <property type="evidence" value="ECO:0007669"/>
    <property type="project" value="UniProtKB-SubCell"/>
</dbReference>
<dbReference type="GO" id="GO:0001917">
    <property type="term" value="C:photoreceptor inner segment"/>
    <property type="evidence" value="ECO:0007669"/>
    <property type="project" value="UniProtKB-SubCell"/>
</dbReference>
<dbReference type="GO" id="GO:0001750">
    <property type="term" value="C:photoreceptor outer segment"/>
    <property type="evidence" value="ECO:0000318"/>
    <property type="project" value="GO_Central"/>
</dbReference>
<dbReference type="GO" id="GO:0008277">
    <property type="term" value="P:regulation of G protein-coupled receptor signaling pathway"/>
    <property type="evidence" value="ECO:0007669"/>
    <property type="project" value="InterPro"/>
</dbReference>
<dbReference type="GO" id="GO:0007601">
    <property type="term" value="P:visual perception"/>
    <property type="evidence" value="ECO:0007669"/>
    <property type="project" value="UniProtKB-KW"/>
</dbReference>
<dbReference type="CDD" id="cd02987">
    <property type="entry name" value="Phd_like_Phd"/>
    <property type="match status" value="1"/>
</dbReference>
<dbReference type="FunFam" id="3.40.30.10:FF:000072">
    <property type="entry name" value="Phosducin like"/>
    <property type="match status" value="1"/>
</dbReference>
<dbReference type="FunFam" id="1.10.168.10:FF:000002">
    <property type="entry name" value="Phosducin, isoform CRA_a"/>
    <property type="match status" value="1"/>
</dbReference>
<dbReference type="Gene3D" id="3.40.30.10">
    <property type="entry name" value="Glutaredoxin"/>
    <property type="match status" value="1"/>
</dbReference>
<dbReference type="Gene3D" id="1.10.168.10">
    <property type="entry name" value="Phosducin, domain 2"/>
    <property type="match status" value="2"/>
</dbReference>
<dbReference type="InterPro" id="IPR001200">
    <property type="entry name" value="Phosducin"/>
</dbReference>
<dbReference type="InterPro" id="IPR051499">
    <property type="entry name" value="Phosducin-like_reg"/>
</dbReference>
<dbReference type="InterPro" id="IPR023196">
    <property type="entry name" value="Phosducin_N_dom_sf"/>
</dbReference>
<dbReference type="InterPro" id="IPR024253">
    <property type="entry name" value="Phosducin_thioredoxin-like_dom"/>
</dbReference>
<dbReference type="InterPro" id="IPR036249">
    <property type="entry name" value="Thioredoxin-like_sf"/>
</dbReference>
<dbReference type="PANTHER" id="PTHR46052:SF3">
    <property type="entry name" value="PHOSDUCIN"/>
    <property type="match status" value="1"/>
</dbReference>
<dbReference type="PANTHER" id="PTHR46052">
    <property type="entry name" value="PHOSDUCIN-LIKE PROTEIN"/>
    <property type="match status" value="1"/>
</dbReference>
<dbReference type="Pfam" id="PF02114">
    <property type="entry name" value="Phosducin"/>
    <property type="match status" value="1"/>
</dbReference>
<dbReference type="PRINTS" id="PR00677">
    <property type="entry name" value="PHOSDUCIN"/>
</dbReference>
<dbReference type="SUPFAM" id="SSF52833">
    <property type="entry name" value="Thioredoxin-like"/>
    <property type="match status" value="1"/>
</dbReference>
<sequence>MEEAKSQSLEEDFEGQATHTGPKGVINDWRKFKLESEDSDSVPPSKKEILRQMSSPQSRDNKDSKERFSRKMSIQEYELIHRDKEDENCLRKYRRQCMQDMHQKLSFGPRYGFVYELETGEQFLETIEKEQKITTIVVHIYEDGIKGCDALNSSFTCLAVEYPMVKFCKIKASNTGARDRFSSDVLPTLLVYKGGELISNFISVSEQFAEEFFAGDVESFLNEYGLLPERETHALDQTNMEEDIE</sequence>
<evidence type="ECO:0000250" key="1"/>
<evidence type="ECO:0000250" key="2">
    <source>
        <dbReference type="UniProtKB" id="P19632"/>
    </source>
</evidence>
<evidence type="ECO:0000250" key="3">
    <source>
        <dbReference type="UniProtKB" id="P20941"/>
    </source>
</evidence>
<evidence type="ECO:0000255" key="4"/>
<evidence type="ECO:0000256" key="5">
    <source>
        <dbReference type="SAM" id="MobiDB-lite"/>
    </source>
</evidence>
<evidence type="ECO:0000305" key="6"/>
<reference key="1">
    <citation type="journal article" date="1995" name="Biochim. Biophys. Acta">
        <title>Sequence analysis and exclusion of phosducin as the gene for the recessive retinal degeneration of the Abyssinian cat.</title>
        <authorList>
            <person name="Gorin M.B."/>
            <person name="To A.C."/>
            <person name="Narfstrom K."/>
        </authorList>
    </citation>
    <scope>NUCLEOTIDE SEQUENCE [MRNA]</scope>
    <source>
        <strain>Abyssinian</strain>
        <tissue>Retina</tissue>
    </source>
</reference>
<gene>
    <name type="primary">PDC</name>
</gene>